<dbReference type="EMBL" id="AF076052">
    <property type="protein sequence ID" value="AAC68609.1"/>
    <property type="molecule type" value="Genomic_DNA"/>
</dbReference>
<dbReference type="SMR" id="O79199"/>
<dbReference type="GO" id="GO:0005743">
    <property type="term" value="C:mitochondrial inner membrane"/>
    <property type="evidence" value="ECO:0007669"/>
    <property type="project" value="UniProtKB-SubCell"/>
</dbReference>
<dbReference type="GO" id="GO:0045275">
    <property type="term" value="C:respiratory chain complex III"/>
    <property type="evidence" value="ECO:0007669"/>
    <property type="project" value="InterPro"/>
</dbReference>
<dbReference type="GO" id="GO:0046872">
    <property type="term" value="F:metal ion binding"/>
    <property type="evidence" value="ECO:0007669"/>
    <property type="project" value="UniProtKB-KW"/>
</dbReference>
<dbReference type="GO" id="GO:0008121">
    <property type="term" value="F:ubiquinol-cytochrome-c reductase activity"/>
    <property type="evidence" value="ECO:0007669"/>
    <property type="project" value="InterPro"/>
</dbReference>
<dbReference type="GO" id="GO:0006122">
    <property type="term" value="P:mitochondrial electron transport, ubiquinol to cytochrome c"/>
    <property type="evidence" value="ECO:0007669"/>
    <property type="project" value="TreeGrafter"/>
</dbReference>
<dbReference type="CDD" id="cd00290">
    <property type="entry name" value="cytochrome_b_C"/>
    <property type="match status" value="1"/>
</dbReference>
<dbReference type="CDD" id="cd00284">
    <property type="entry name" value="Cytochrome_b_N"/>
    <property type="match status" value="1"/>
</dbReference>
<dbReference type="FunFam" id="1.20.810.10:FF:000002">
    <property type="entry name" value="Cytochrome b"/>
    <property type="match status" value="1"/>
</dbReference>
<dbReference type="Gene3D" id="1.20.810.10">
    <property type="entry name" value="Cytochrome Bc1 Complex, Chain C"/>
    <property type="match status" value="1"/>
</dbReference>
<dbReference type="InterPro" id="IPR005798">
    <property type="entry name" value="Cyt_b/b6_C"/>
</dbReference>
<dbReference type="InterPro" id="IPR036150">
    <property type="entry name" value="Cyt_b/b6_C_sf"/>
</dbReference>
<dbReference type="InterPro" id="IPR005797">
    <property type="entry name" value="Cyt_b/b6_N"/>
</dbReference>
<dbReference type="InterPro" id="IPR027387">
    <property type="entry name" value="Cytb/b6-like_sf"/>
</dbReference>
<dbReference type="InterPro" id="IPR030689">
    <property type="entry name" value="Cytochrome_b"/>
</dbReference>
<dbReference type="InterPro" id="IPR048260">
    <property type="entry name" value="Cytochrome_b_C_euk/bac"/>
</dbReference>
<dbReference type="InterPro" id="IPR048259">
    <property type="entry name" value="Cytochrome_b_N_euk/bac"/>
</dbReference>
<dbReference type="InterPro" id="IPR016174">
    <property type="entry name" value="Di-haem_cyt_TM"/>
</dbReference>
<dbReference type="PANTHER" id="PTHR19271">
    <property type="entry name" value="CYTOCHROME B"/>
    <property type="match status" value="1"/>
</dbReference>
<dbReference type="PANTHER" id="PTHR19271:SF16">
    <property type="entry name" value="CYTOCHROME B"/>
    <property type="match status" value="1"/>
</dbReference>
<dbReference type="Pfam" id="PF00032">
    <property type="entry name" value="Cytochrom_B_C"/>
    <property type="match status" value="1"/>
</dbReference>
<dbReference type="Pfam" id="PF00033">
    <property type="entry name" value="Cytochrome_B"/>
    <property type="match status" value="1"/>
</dbReference>
<dbReference type="PIRSF" id="PIRSF038885">
    <property type="entry name" value="COB"/>
    <property type="match status" value="1"/>
</dbReference>
<dbReference type="SUPFAM" id="SSF81648">
    <property type="entry name" value="a domain/subunit of cytochrome bc1 complex (Ubiquinol-cytochrome c reductase)"/>
    <property type="match status" value="1"/>
</dbReference>
<dbReference type="SUPFAM" id="SSF81342">
    <property type="entry name" value="Transmembrane di-heme cytochromes"/>
    <property type="match status" value="1"/>
</dbReference>
<dbReference type="PROSITE" id="PS51003">
    <property type="entry name" value="CYTB_CTER"/>
    <property type="match status" value="1"/>
</dbReference>
<dbReference type="PROSITE" id="PS51002">
    <property type="entry name" value="CYTB_NTER"/>
    <property type="match status" value="1"/>
</dbReference>
<geneLocation type="mitochondrion"/>
<sequence>MAPNLRKSHPLLKTINNSLIDLPTPSNISAWWNFGSLLGICLATQILTGLLLAAHYTADTTLAFSSVAHTCRNVQYGWLIRNLHANGASFFFICIYLHIGRGLYYGSYLYKETWNTGIILLLTLMATAFVGYVLPWGQMSFWGATVITNLFSAIPYIGQTLVEWAWGGFSVDNPTLTRFFTLHFLLPFMIAGLTLIHLTFLHESGSNNPLGIVANSDKIPFHPYYSTKDILGFILLLLPLTALALFSPNLLGDPENFTPANPLVTPPHIKPEWYFLFAYAILRSIPNKLGGVLALAASVLILFLIPLLHKSKQRTMTFRPLSQLLFWTLVANLTILTWIGSQPVEHPFIIIGQLASLTYFTILLILFPLIGTLENKMLNH</sequence>
<gene>
    <name type="primary">MT-CYB</name>
    <name type="synonym">COB</name>
    <name type="synonym">CYTB</name>
    <name type="synonym">MTCYB</name>
</gene>
<comment type="function">
    <text evidence="2">Component of the ubiquinol-cytochrome c reductase complex (complex III or cytochrome b-c1 complex) that is part of the mitochondrial respiratory chain. The b-c1 complex mediates electron transfer from ubiquinol to cytochrome c. Contributes to the generation of a proton gradient across the mitochondrial membrane that is then used for ATP synthesis.</text>
</comment>
<comment type="cofactor">
    <cofactor evidence="2">
        <name>heme b</name>
        <dbReference type="ChEBI" id="CHEBI:60344"/>
    </cofactor>
    <text evidence="2">Binds 2 heme b groups non-covalently.</text>
</comment>
<comment type="subunit">
    <text evidence="2">The cytochrome bc1 complex contains 11 subunits: 3 respiratory subunits (MT-CYB, CYC1 and UQCRFS1), 2 core proteins (UQCRC1 and UQCRC2) and 6 low-molecular weight proteins (UQCRH/QCR6, UQCRB/QCR7, UQCRQ/QCR8, UQCR10/QCR9, UQCR11/QCR10 and a cleavage product of UQCRFS1). This cytochrome bc1 complex then forms a dimer.</text>
</comment>
<comment type="subcellular location">
    <subcellularLocation>
        <location evidence="2">Mitochondrion inner membrane</location>
        <topology evidence="2">Multi-pass membrane protein</topology>
    </subcellularLocation>
</comment>
<comment type="miscellaneous">
    <text evidence="1">Heme 1 (or BL or b562) is low-potential and absorbs at about 562 nm, and heme 2 (or BH or b566) is high-potential and absorbs at about 566 nm.</text>
</comment>
<comment type="similarity">
    <text evidence="3 4">Belongs to the cytochrome b family.</text>
</comment>
<comment type="caution">
    <text evidence="2">The full-length protein contains only eight transmembrane helices, not nine as predicted by bioinformatics tools.</text>
</comment>
<feature type="chain" id="PRO_0000060952" description="Cytochrome b">
    <location>
        <begin position="1"/>
        <end position="380"/>
    </location>
</feature>
<feature type="transmembrane region" description="Helical" evidence="2">
    <location>
        <begin position="34"/>
        <end position="54"/>
    </location>
</feature>
<feature type="transmembrane region" description="Helical" evidence="2">
    <location>
        <begin position="78"/>
        <end position="99"/>
    </location>
</feature>
<feature type="transmembrane region" description="Helical" evidence="2">
    <location>
        <begin position="114"/>
        <end position="134"/>
    </location>
</feature>
<feature type="transmembrane region" description="Helical" evidence="2">
    <location>
        <begin position="179"/>
        <end position="199"/>
    </location>
</feature>
<feature type="transmembrane region" description="Helical" evidence="2">
    <location>
        <begin position="227"/>
        <end position="247"/>
    </location>
</feature>
<feature type="transmembrane region" description="Helical" evidence="2">
    <location>
        <begin position="289"/>
        <end position="309"/>
    </location>
</feature>
<feature type="transmembrane region" description="Helical" evidence="2">
    <location>
        <begin position="321"/>
        <end position="341"/>
    </location>
</feature>
<feature type="transmembrane region" description="Helical" evidence="2">
    <location>
        <begin position="348"/>
        <end position="368"/>
    </location>
</feature>
<feature type="binding site" description="axial binding residue" evidence="2">
    <location>
        <position position="84"/>
    </location>
    <ligand>
        <name>heme b</name>
        <dbReference type="ChEBI" id="CHEBI:60344"/>
        <label>b562</label>
    </ligand>
    <ligandPart>
        <name>Fe</name>
        <dbReference type="ChEBI" id="CHEBI:18248"/>
    </ligandPart>
</feature>
<feature type="binding site" description="axial binding residue" evidence="2">
    <location>
        <position position="98"/>
    </location>
    <ligand>
        <name>heme b</name>
        <dbReference type="ChEBI" id="CHEBI:60344"/>
        <label>b566</label>
    </ligand>
    <ligandPart>
        <name>Fe</name>
        <dbReference type="ChEBI" id="CHEBI:18248"/>
    </ligandPart>
</feature>
<feature type="binding site" description="axial binding residue" evidence="2">
    <location>
        <position position="183"/>
    </location>
    <ligand>
        <name>heme b</name>
        <dbReference type="ChEBI" id="CHEBI:60344"/>
        <label>b562</label>
    </ligand>
    <ligandPart>
        <name>Fe</name>
        <dbReference type="ChEBI" id="CHEBI:18248"/>
    </ligandPart>
</feature>
<feature type="binding site" description="axial binding residue" evidence="2">
    <location>
        <position position="197"/>
    </location>
    <ligand>
        <name>heme b</name>
        <dbReference type="ChEBI" id="CHEBI:60344"/>
        <label>b566</label>
    </ligand>
    <ligandPart>
        <name>Fe</name>
        <dbReference type="ChEBI" id="CHEBI:18248"/>
    </ligandPart>
</feature>
<feature type="binding site" evidence="2">
    <location>
        <position position="202"/>
    </location>
    <ligand>
        <name>a ubiquinone</name>
        <dbReference type="ChEBI" id="CHEBI:16389"/>
    </ligand>
</feature>
<evidence type="ECO:0000250" key="1"/>
<evidence type="ECO:0000250" key="2">
    <source>
        <dbReference type="UniProtKB" id="P00157"/>
    </source>
</evidence>
<evidence type="ECO:0000255" key="3">
    <source>
        <dbReference type="PROSITE-ProRule" id="PRU00967"/>
    </source>
</evidence>
<evidence type="ECO:0000255" key="4">
    <source>
        <dbReference type="PROSITE-ProRule" id="PRU00968"/>
    </source>
</evidence>
<accession>O79199</accession>
<name>CYB_EUDCY</name>
<organism>
    <name type="scientific">Eudyptes chrysolophus</name>
    <name type="common">Macaroni penguin</name>
    <dbReference type="NCBI Taxonomy" id="79627"/>
    <lineage>
        <taxon>Eukaryota</taxon>
        <taxon>Metazoa</taxon>
        <taxon>Chordata</taxon>
        <taxon>Craniata</taxon>
        <taxon>Vertebrata</taxon>
        <taxon>Euteleostomi</taxon>
        <taxon>Archelosauria</taxon>
        <taxon>Archosauria</taxon>
        <taxon>Dinosauria</taxon>
        <taxon>Saurischia</taxon>
        <taxon>Theropoda</taxon>
        <taxon>Coelurosauria</taxon>
        <taxon>Aves</taxon>
        <taxon>Neognathae</taxon>
        <taxon>Neoaves</taxon>
        <taxon>Aequornithes</taxon>
        <taxon>Sphenisciformes</taxon>
        <taxon>Spheniscidae</taxon>
        <taxon>Eudyptes</taxon>
    </lineage>
</organism>
<protein>
    <recommendedName>
        <fullName>Cytochrome b</fullName>
    </recommendedName>
    <alternativeName>
        <fullName>Complex III subunit 3</fullName>
    </alternativeName>
    <alternativeName>
        <fullName>Complex III subunit III</fullName>
    </alternativeName>
    <alternativeName>
        <fullName>Cytochrome b-c1 complex subunit 3</fullName>
    </alternativeName>
    <alternativeName>
        <fullName>Ubiquinol-cytochrome-c reductase complex cytochrome b subunit</fullName>
    </alternativeName>
</protein>
<reference key="1">
    <citation type="journal article" date="1998" name="Mol. Biol. Evol.">
        <title>Body size effects and rates of cytochrome-b evolution in tube-nosed seabirds.</title>
        <authorList>
            <person name="Nunn G.B."/>
            <person name="Stanley S.E."/>
        </authorList>
    </citation>
    <scope>NUCLEOTIDE SEQUENCE [GENOMIC DNA]</scope>
    <source>
        <strain>Isolate MacP-MI-1</strain>
    </source>
</reference>
<keyword id="KW-0249">Electron transport</keyword>
<keyword id="KW-0349">Heme</keyword>
<keyword id="KW-0408">Iron</keyword>
<keyword id="KW-0472">Membrane</keyword>
<keyword id="KW-0479">Metal-binding</keyword>
<keyword id="KW-0496">Mitochondrion</keyword>
<keyword id="KW-0999">Mitochondrion inner membrane</keyword>
<keyword id="KW-0679">Respiratory chain</keyword>
<keyword id="KW-0812">Transmembrane</keyword>
<keyword id="KW-1133">Transmembrane helix</keyword>
<keyword id="KW-0813">Transport</keyword>
<keyword id="KW-0830">Ubiquinone</keyword>
<proteinExistence type="inferred from homology"/>